<proteinExistence type="evidence at protein level"/>
<name>RN2_LITPI</name>
<feature type="signal peptide" evidence="2">
    <location>
        <begin position="1"/>
        <end position="20"/>
    </location>
</feature>
<feature type="propeptide" id="PRO_0000003467" evidence="3">
    <location>
        <begin position="21"/>
        <end position="44"/>
    </location>
</feature>
<feature type="peptide" id="PRO_0000003468" description="Ranatuerin-2P">
    <location>
        <begin position="45"/>
        <end position="71"/>
    </location>
</feature>
<feature type="disulfide bond" evidence="1">
    <location>
        <begin position="66"/>
        <end position="71"/>
    </location>
</feature>
<keyword id="KW-0878">Amphibian defense peptide</keyword>
<keyword id="KW-0044">Antibiotic</keyword>
<keyword id="KW-0929">Antimicrobial</keyword>
<keyword id="KW-0903">Direct protein sequencing</keyword>
<keyword id="KW-1015">Disulfide bond</keyword>
<keyword id="KW-0295">Fungicide</keyword>
<keyword id="KW-0964">Secreted</keyword>
<keyword id="KW-0732">Signal</keyword>
<reference key="1">
    <citation type="journal article" date="2003" name="Biochem. J.">
        <title>Granular gland transcriptomes in stimulated amphibian skin secretions.</title>
        <authorList>
            <person name="Chen T."/>
            <person name="Farragher S.M."/>
            <person name="Bjourson A.J."/>
            <person name="Orr D.F."/>
            <person name="Rao P."/>
            <person name="Shaw C."/>
        </authorList>
    </citation>
    <scope>NUCLEOTIDE SEQUENCE [MRNA]</scope>
    <source>
        <tissue>Skin</tissue>
    </source>
</reference>
<reference key="2">
    <citation type="journal article" date="2000" name="Eur. J. Biochem.">
        <title>Peptides with antimicrobial activity from four different families isolated from the skins of the North American frogs Rana luteiventris, Rana berlandieri and Rana pipiens.</title>
        <authorList>
            <person name="Goraya J."/>
            <person name="Wang Y."/>
            <person name="Li Z."/>
            <person name="O'Flaherty M."/>
            <person name="Knoop F.C."/>
            <person name="Platz J.E."/>
            <person name="Conlon J.M."/>
        </authorList>
    </citation>
    <scope>PROTEIN SEQUENCE OF 45-71</scope>
    <scope>FUNCTION</scope>
    <scope>MASS SPECTROMETRY</scope>
    <source>
        <tissue>Skin secretion</tissue>
    </source>
</reference>
<comment type="function">
    <text evidence="3">Antibacterial activity against Gram-positive bacterium S.aureus and Gram-negative bacterium E.coli. Has activity against C.albicans.</text>
</comment>
<comment type="subcellular location">
    <subcellularLocation>
        <location>Secreted</location>
    </subcellularLocation>
</comment>
<comment type="tissue specificity">
    <text>Expressed by the skin glands.</text>
</comment>
<comment type="mass spectrometry"/>
<comment type="similarity">
    <text evidence="4">Belongs to the frog skin active peptide (FSAP) family. Ranatuerin subfamily.</text>
</comment>
<organism>
    <name type="scientific">Lithobates pipiens</name>
    <name type="common">Northern leopard frog</name>
    <name type="synonym">Rana pipiens</name>
    <dbReference type="NCBI Taxonomy" id="8404"/>
    <lineage>
        <taxon>Eukaryota</taxon>
        <taxon>Metazoa</taxon>
        <taxon>Chordata</taxon>
        <taxon>Craniata</taxon>
        <taxon>Vertebrata</taxon>
        <taxon>Euteleostomi</taxon>
        <taxon>Amphibia</taxon>
        <taxon>Batrachia</taxon>
        <taxon>Anura</taxon>
        <taxon>Neobatrachia</taxon>
        <taxon>Ranoidea</taxon>
        <taxon>Ranidae</taxon>
        <taxon>Lithobates</taxon>
    </lineage>
</organism>
<evidence type="ECO:0000250" key="1"/>
<evidence type="ECO:0000255" key="2"/>
<evidence type="ECO:0000269" key="3">
    <source>
    </source>
</evidence>
<evidence type="ECO:0000305" key="4"/>
<sequence>MFTMKKSLLLFFFLGTISLSLCEQERGADEDDGVEITEEEVKRGLMDTVKNVAKNLAGHMLDKLKCKITGC</sequence>
<protein>
    <recommendedName>
        <fullName>Ranatuerin-2P</fullName>
    </recommendedName>
</protein>
<dbReference type="EMBL" id="AJ427747">
    <property type="protein sequence ID" value="CAD20746.1"/>
    <property type="molecule type" value="mRNA"/>
</dbReference>
<dbReference type="SMR" id="Q8QFQ4"/>
<dbReference type="TCDB" id="1.C.52.1.7">
    <property type="family name" value="the dermaseptin (dermaseptin) family"/>
</dbReference>
<dbReference type="GO" id="GO:0005576">
    <property type="term" value="C:extracellular region"/>
    <property type="evidence" value="ECO:0007669"/>
    <property type="project" value="UniProtKB-SubCell"/>
</dbReference>
<dbReference type="GO" id="GO:0050832">
    <property type="term" value="P:defense response to fungus"/>
    <property type="evidence" value="ECO:0007669"/>
    <property type="project" value="UniProtKB-KW"/>
</dbReference>
<dbReference type="GO" id="GO:0050829">
    <property type="term" value="P:defense response to Gram-negative bacterium"/>
    <property type="evidence" value="ECO:0007669"/>
    <property type="project" value="UniProtKB-ARBA"/>
</dbReference>
<dbReference type="GO" id="GO:0031640">
    <property type="term" value="P:killing of cells of another organism"/>
    <property type="evidence" value="ECO:0007669"/>
    <property type="project" value="UniProtKB-KW"/>
</dbReference>
<dbReference type="InterPro" id="IPR012521">
    <property type="entry name" value="Antimicrobial_frog_2"/>
</dbReference>
<dbReference type="InterPro" id="IPR004275">
    <property type="entry name" value="Frog_antimicrobial_propeptide"/>
</dbReference>
<dbReference type="Pfam" id="PF08023">
    <property type="entry name" value="Antimicrobial_2"/>
    <property type="match status" value="1"/>
</dbReference>
<dbReference type="Pfam" id="PF03032">
    <property type="entry name" value="FSAP_sig_propep"/>
    <property type="match status" value="1"/>
</dbReference>
<accession>Q8QFQ4</accession>
<accession>P82847</accession>